<feature type="chain" id="PRO_0000102064" description="ATP-dependent DNA helicase PcrA">
    <location>
        <begin position="1"/>
        <end position="729"/>
    </location>
</feature>
<feature type="domain" description="UvrD-like helicase ATP-binding" evidence="2">
    <location>
        <begin position="6"/>
        <end position="285"/>
    </location>
</feature>
<feature type="domain" description="UvrD-like helicase C-terminal" evidence="3">
    <location>
        <begin position="286"/>
        <end position="560"/>
    </location>
</feature>
<feature type="region of interest" description="Disordered" evidence="4">
    <location>
        <begin position="642"/>
        <end position="674"/>
    </location>
</feature>
<feature type="compositionally biased region" description="Polar residues" evidence="4">
    <location>
        <begin position="662"/>
        <end position="674"/>
    </location>
</feature>
<feature type="binding site" evidence="2">
    <location>
        <begin position="30"/>
        <end position="35"/>
    </location>
    <ligand>
        <name>ATP</name>
        <dbReference type="ChEBI" id="CHEBI:30616"/>
    </ligand>
</feature>
<feature type="binding site" evidence="1">
    <location>
        <position position="283"/>
    </location>
    <ligand>
        <name>ATP</name>
        <dbReference type="ChEBI" id="CHEBI:30616"/>
    </ligand>
</feature>
<proteinExistence type="inferred from homology"/>
<name>PCRA_STAEQ</name>
<dbReference type="EC" id="5.6.2.4"/>
<dbReference type="EMBL" id="CP000029">
    <property type="protein sequence ID" value="AAW54831.1"/>
    <property type="molecule type" value="Genomic_DNA"/>
</dbReference>
<dbReference type="RefSeq" id="WP_001830418.1">
    <property type="nucleotide sequence ID" value="NC_002976.3"/>
</dbReference>
<dbReference type="SMR" id="Q5HN29"/>
<dbReference type="STRING" id="176279.SERP1443"/>
<dbReference type="GeneID" id="50018310"/>
<dbReference type="KEGG" id="ser:SERP1443"/>
<dbReference type="eggNOG" id="COG0210">
    <property type="taxonomic scope" value="Bacteria"/>
</dbReference>
<dbReference type="HOGENOM" id="CLU_004585_5_2_9"/>
<dbReference type="Proteomes" id="UP000000531">
    <property type="component" value="Chromosome"/>
</dbReference>
<dbReference type="GO" id="GO:0005829">
    <property type="term" value="C:cytosol"/>
    <property type="evidence" value="ECO:0007669"/>
    <property type="project" value="TreeGrafter"/>
</dbReference>
<dbReference type="GO" id="GO:0033202">
    <property type="term" value="C:DNA helicase complex"/>
    <property type="evidence" value="ECO:0007669"/>
    <property type="project" value="TreeGrafter"/>
</dbReference>
<dbReference type="GO" id="GO:0043138">
    <property type="term" value="F:3'-5' DNA helicase activity"/>
    <property type="evidence" value="ECO:0007669"/>
    <property type="project" value="TreeGrafter"/>
</dbReference>
<dbReference type="GO" id="GO:0005524">
    <property type="term" value="F:ATP binding"/>
    <property type="evidence" value="ECO:0007669"/>
    <property type="project" value="UniProtKB-KW"/>
</dbReference>
<dbReference type="GO" id="GO:0016887">
    <property type="term" value="F:ATP hydrolysis activity"/>
    <property type="evidence" value="ECO:0007669"/>
    <property type="project" value="RHEA"/>
</dbReference>
<dbReference type="GO" id="GO:0003677">
    <property type="term" value="F:DNA binding"/>
    <property type="evidence" value="ECO:0007669"/>
    <property type="project" value="UniProtKB-KW"/>
</dbReference>
<dbReference type="GO" id="GO:0006260">
    <property type="term" value="P:DNA replication"/>
    <property type="evidence" value="ECO:0007669"/>
    <property type="project" value="InterPro"/>
</dbReference>
<dbReference type="GO" id="GO:0000725">
    <property type="term" value="P:recombinational repair"/>
    <property type="evidence" value="ECO:0007669"/>
    <property type="project" value="TreeGrafter"/>
</dbReference>
<dbReference type="CDD" id="cd17932">
    <property type="entry name" value="DEXQc_UvrD"/>
    <property type="match status" value="1"/>
</dbReference>
<dbReference type="CDD" id="cd18807">
    <property type="entry name" value="SF1_C_UvrD"/>
    <property type="match status" value="1"/>
</dbReference>
<dbReference type="FunFam" id="1.10.10.160:FF:000001">
    <property type="entry name" value="ATP-dependent DNA helicase"/>
    <property type="match status" value="1"/>
</dbReference>
<dbReference type="FunFam" id="1.10.486.10:FF:000003">
    <property type="entry name" value="ATP-dependent DNA helicase"/>
    <property type="match status" value="1"/>
</dbReference>
<dbReference type="Gene3D" id="1.10.10.160">
    <property type="match status" value="1"/>
</dbReference>
<dbReference type="Gene3D" id="3.40.50.300">
    <property type="entry name" value="P-loop containing nucleotide triphosphate hydrolases"/>
    <property type="match status" value="2"/>
</dbReference>
<dbReference type="Gene3D" id="1.10.486.10">
    <property type="entry name" value="PCRA, domain 4"/>
    <property type="match status" value="1"/>
</dbReference>
<dbReference type="InterPro" id="IPR005751">
    <property type="entry name" value="ATP-dep_DNA_helicase_PcrA"/>
</dbReference>
<dbReference type="InterPro" id="IPR013986">
    <property type="entry name" value="DExx_box_DNA_helicase_dom_sf"/>
</dbReference>
<dbReference type="InterPro" id="IPR014017">
    <property type="entry name" value="DNA_helicase_UvrD-like_C"/>
</dbReference>
<dbReference type="InterPro" id="IPR000212">
    <property type="entry name" value="DNA_helicase_UvrD/REP"/>
</dbReference>
<dbReference type="InterPro" id="IPR027417">
    <property type="entry name" value="P-loop_NTPase"/>
</dbReference>
<dbReference type="InterPro" id="IPR014016">
    <property type="entry name" value="UvrD-like_ATP-bd"/>
</dbReference>
<dbReference type="NCBIfam" id="TIGR01073">
    <property type="entry name" value="pcrA"/>
    <property type="match status" value="1"/>
</dbReference>
<dbReference type="PANTHER" id="PTHR11070:SF2">
    <property type="entry name" value="ATP-DEPENDENT DNA HELICASE SRS2"/>
    <property type="match status" value="1"/>
</dbReference>
<dbReference type="PANTHER" id="PTHR11070">
    <property type="entry name" value="UVRD / RECB / PCRA DNA HELICASE FAMILY MEMBER"/>
    <property type="match status" value="1"/>
</dbReference>
<dbReference type="Pfam" id="PF21196">
    <property type="entry name" value="PcrA_UvrD_tudor"/>
    <property type="match status" value="1"/>
</dbReference>
<dbReference type="Pfam" id="PF00580">
    <property type="entry name" value="UvrD-helicase"/>
    <property type="match status" value="1"/>
</dbReference>
<dbReference type="Pfam" id="PF13361">
    <property type="entry name" value="UvrD_C"/>
    <property type="match status" value="1"/>
</dbReference>
<dbReference type="SUPFAM" id="SSF52540">
    <property type="entry name" value="P-loop containing nucleoside triphosphate hydrolases"/>
    <property type="match status" value="1"/>
</dbReference>
<dbReference type="PROSITE" id="PS51198">
    <property type="entry name" value="UVRD_HELICASE_ATP_BIND"/>
    <property type="match status" value="1"/>
</dbReference>
<dbReference type="PROSITE" id="PS51217">
    <property type="entry name" value="UVRD_HELICASE_CTER"/>
    <property type="match status" value="1"/>
</dbReference>
<organism>
    <name type="scientific">Staphylococcus epidermidis (strain ATCC 35984 / DSM 28319 / BCRC 17069 / CCUG 31568 / BM 3577 / RP62A)</name>
    <dbReference type="NCBI Taxonomy" id="176279"/>
    <lineage>
        <taxon>Bacteria</taxon>
        <taxon>Bacillati</taxon>
        <taxon>Bacillota</taxon>
        <taxon>Bacilli</taxon>
        <taxon>Bacillales</taxon>
        <taxon>Staphylococcaceae</taxon>
        <taxon>Staphylococcus</taxon>
    </lineage>
</organism>
<accession>Q5HN29</accession>
<keyword id="KW-0067">ATP-binding</keyword>
<keyword id="KW-0238">DNA-binding</keyword>
<keyword id="KW-0347">Helicase</keyword>
<keyword id="KW-0378">Hydrolase</keyword>
<keyword id="KW-0413">Isomerase</keyword>
<keyword id="KW-0547">Nucleotide-binding</keyword>
<keyword id="KW-1185">Reference proteome</keyword>
<gene>
    <name type="primary">pcrA</name>
    <name type="ordered locus">SERP1443</name>
</gene>
<comment type="function">
    <text evidence="1">Essential helicase.</text>
</comment>
<comment type="catalytic activity">
    <reaction>
        <text>Couples ATP hydrolysis with the unwinding of duplex DNA by translocating in the 3'-5' direction.</text>
        <dbReference type="EC" id="5.6.2.4"/>
    </reaction>
</comment>
<comment type="catalytic activity">
    <reaction>
        <text>ATP + H2O = ADP + phosphate + H(+)</text>
        <dbReference type="Rhea" id="RHEA:13065"/>
        <dbReference type="ChEBI" id="CHEBI:15377"/>
        <dbReference type="ChEBI" id="CHEBI:15378"/>
        <dbReference type="ChEBI" id="CHEBI:30616"/>
        <dbReference type="ChEBI" id="CHEBI:43474"/>
        <dbReference type="ChEBI" id="CHEBI:456216"/>
        <dbReference type="EC" id="5.6.2.4"/>
    </reaction>
</comment>
<comment type="similarity">
    <text evidence="5">Belongs to the helicase family. UvrD subfamily.</text>
</comment>
<sequence length="729" mass="83888">MNALVKNMNSEQSEAVRTTEGPLLIMAGAGSGKTRVLTHRIAYLLDEKDVSPYNILAITFTNKAAKEMKARVEHLVGEEAQVIWMSTFHSMCVRILRRDADRIGIERNFTIIDPTDQKSVIKDVLKSENIDSKRFEPRMFIGAISNLKNELKTPEDAQKEANDFHSQMVATVYKGYQRQLSRNEALDFDDLIMTTINLFERVPETLEYYQNKFQYIHVDEYQDTNKAQYTLVKLLANKFKNLCVVGDSDQSIYGWRGADIQNILSFEEDYPEAKTIFLEQNYRSTKNILNAANEVIKHNSERKPKGLWTANSGGDKIQYYEAMTERDEAEYVVKEIMKHQRSGKKYSEMAILYRTNAQSRVLEETFMKSNIPYTMVGGQKFYDRKEIKDLLSYLRVIANSNDDISLQRIINVPKRGIGPSSVEKIQTYALQNNISMFDALAEVDFIGLSKKVTQECISFYEMIQNLIKEQEFLEISEIVDEVLQKSGYRDMLDREQSIESRSRLENLDEFMSVPKDYEENTPLEEQSLINFLTDLSLVADIDEADTQNGVTLMTMHSAKGLEFPIVFIMGMEESLFPHIRAIKSEDDHEMEEERRICYVAITRAEELLYITNATTRMLFGRSQSNMPSRFLKEIPEDLLDSHTGQKRQTIYPKSQPKRGFSKRTTSTKKQVSSSDWKVGDKVMHKAWGEGMVSNVNEKNGSVELDIIFKSEGPKRLLAQFAPITKKEDS</sequence>
<reference key="1">
    <citation type="journal article" date="2005" name="J. Bacteriol.">
        <title>Insights on evolution of virulence and resistance from the complete genome analysis of an early methicillin-resistant Staphylococcus aureus strain and a biofilm-producing methicillin-resistant Staphylococcus epidermidis strain.</title>
        <authorList>
            <person name="Gill S.R."/>
            <person name="Fouts D.E."/>
            <person name="Archer G.L."/>
            <person name="Mongodin E.F."/>
            <person name="DeBoy R.T."/>
            <person name="Ravel J."/>
            <person name="Paulsen I.T."/>
            <person name="Kolonay J.F."/>
            <person name="Brinkac L.M."/>
            <person name="Beanan M.J."/>
            <person name="Dodson R.J."/>
            <person name="Daugherty S.C."/>
            <person name="Madupu R."/>
            <person name="Angiuoli S.V."/>
            <person name="Durkin A.S."/>
            <person name="Haft D.H."/>
            <person name="Vamathevan J.J."/>
            <person name="Khouri H."/>
            <person name="Utterback T.R."/>
            <person name="Lee C."/>
            <person name="Dimitrov G."/>
            <person name="Jiang L."/>
            <person name="Qin H."/>
            <person name="Weidman J."/>
            <person name="Tran K."/>
            <person name="Kang K.H."/>
            <person name="Hance I.R."/>
            <person name="Nelson K.E."/>
            <person name="Fraser C.M."/>
        </authorList>
    </citation>
    <scope>NUCLEOTIDE SEQUENCE [LARGE SCALE GENOMIC DNA]</scope>
    <source>
        <strain>ATCC 35984 / DSM 28319 / BCRC 17069 / CCUG 31568 / BM 3577 / RP62A</strain>
    </source>
</reference>
<evidence type="ECO:0000250" key="1"/>
<evidence type="ECO:0000255" key="2">
    <source>
        <dbReference type="PROSITE-ProRule" id="PRU00560"/>
    </source>
</evidence>
<evidence type="ECO:0000255" key="3">
    <source>
        <dbReference type="PROSITE-ProRule" id="PRU00617"/>
    </source>
</evidence>
<evidence type="ECO:0000256" key="4">
    <source>
        <dbReference type="SAM" id="MobiDB-lite"/>
    </source>
</evidence>
<evidence type="ECO:0000305" key="5"/>
<protein>
    <recommendedName>
        <fullName>ATP-dependent DNA helicase PcrA</fullName>
        <ecNumber>5.6.2.4</ecNumber>
    </recommendedName>
    <alternativeName>
        <fullName evidence="5">DNA 3'-5' helicase PcrA</fullName>
    </alternativeName>
</protein>